<accession>Q1QH30</accession>
<proteinExistence type="inferred from homology"/>
<protein>
    <recommendedName>
        <fullName evidence="1">Ribonuclease H</fullName>
        <shortName evidence="1">RNase H</shortName>
        <ecNumber evidence="1">3.1.26.4</ecNumber>
    </recommendedName>
</protein>
<gene>
    <name evidence="1" type="primary">rnhA</name>
    <name type="ordered locus">Nham_3743</name>
</gene>
<name>RNH_NITHX</name>
<keyword id="KW-0963">Cytoplasm</keyword>
<keyword id="KW-0255">Endonuclease</keyword>
<keyword id="KW-0378">Hydrolase</keyword>
<keyword id="KW-0460">Magnesium</keyword>
<keyword id="KW-0479">Metal-binding</keyword>
<keyword id="KW-0540">Nuclease</keyword>
<keyword id="KW-1185">Reference proteome</keyword>
<sequence>MNSSALPHVTIFTDGACSGNPGPGGWGAILRFGEIEKELKGGEPHTTNNRMELLAAISALEALKKAASVDLTTDSQYVRQGITSWIHNWKRNGWRTADKKPVKNADLWQRLDTALQPHQVRWHWIKGHAGHDENERADQLAREGVALARLK</sequence>
<dbReference type="EC" id="3.1.26.4" evidence="1"/>
<dbReference type="EMBL" id="CP000319">
    <property type="protein sequence ID" value="ABE64467.1"/>
    <property type="molecule type" value="Genomic_DNA"/>
</dbReference>
<dbReference type="RefSeq" id="WP_011512104.1">
    <property type="nucleotide sequence ID" value="NC_007964.1"/>
</dbReference>
<dbReference type="SMR" id="Q1QH30"/>
<dbReference type="STRING" id="323097.Nham_3743"/>
<dbReference type="KEGG" id="nha:Nham_3743"/>
<dbReference type="eggNOG" id="COG0328">
    <property type="taxonomic scope" value="Bacteria"/>
</dbReference>
<dbReference type="HOGENOM" id="CLU_030894_6_0_5"/>
<dbReference type="OrthoDB" id="7845843at2"/>
<dbReference type="Proteomes" id="UP000001953">
    <property type="component" value="Chromosome"/>
</dbReference>
<dbReference type="GO" id="GO:0005737">
    <property type="term" value="C:cytoplasm"/>
    <property type="evidence" value="ECO:0007669"/>
    <property type="project" value="UniProtKB-SubCell"/>
</dbReference>
<dbReference type="GO" id="GO:0000287">
    <property type="term" value="F:magnesium ion binding"/>
    <property type="evidence" value="ECO:0007669"/>
    <property type="project" value="UniProtKB-UniRule"/>
</dbReference>
<dbReference type="GO" id="GO:0003676">
    <property type="term" value="F:nucleic acid binding"/>
    <property type="evidence" value="ECO:0007669"/>
    <property type="project" value="InterPro"/>
</dbReference>
<dbReference type="GO" id="GO:0004523">
    <property type="term" value="F:RNA-DNA hybrid ribonuclease activity"/>
    <property type="evidence" value="ECO:0007669"/>
    <property type="project" value="UniProtKB-UniRule"/>
</dbReference>
<dbReference type="GO" id="GO:0043137">
    <property type="term" value="P:DNA replication, removal of RNA primer"/>
    <property type="evidence" value="ECO:0007669"/>
    <property type="project" value="TreeGrafter"/>
</dbReference>
<dbReference type="CDD" id="cd09278">
    <property type="entry name" value="RNase_HI_prokaryote_like"/>
    <property type="match status" value="1"/>
</dbReference>
<dbReference type="FunFam" id="3.30.420.10:FF:000008">
    <property type="entry name" value="Ribonuclease H"/>
    <property type="match status" value="1"/>
</dbReference>
<dbReference type="Gene3D" id="3.30.420.10">
    <property type="entry name" value="Ribonuclease H-like superfamily/Ribonuclease H"/>
    <property type="match status" value="1"/>
</dbReference>
<dbReference type="HAMAP" id="MF_00042">
    <property type="entry name" value="RNase_H"/>
    <property type="match status" value="1"/>
</dbReference>
<dbReference type="InterPro" id="IPR050092">
    <property type="entry name" value="RNase_H"/>
</dbReference>
<dbReference type="InterPro" id="IPR012337">
    <property type="entry name" value="RNaseH-like_sf"/>
</dbReference>
<dbReference type="InterPro" id="IPR002156">
    <property type="entry name" value="RNaseH_domain"/>
</dbReference>
<dbReference type="InterPro" id="IPR036397">
    <property type="entry name" value="RNaseH_sf"/>
</dbReference>
<dbReference type="InterPro" id="IPR022892">
    <property type="entry name" value="RNaseHI"/>
</dbReference>
<dbReference type="NCBIfam" id="NF001236">
    <property type="entry name" value="PRK00203.1"/>
    <property type="match status" value="1"/>
</dbReference>
<dbReference type="PANTHER" id="PTHR10642">
    <property type="entry name" value="RIBONUCLEASE H1"/>
    <property type="match status" value="1"/>
</dbReference>
<dbReference type="PANTHER" id="PTHR10642:SF26">
    <property type="entry name" value="RIBONUCLEASE H1"/>
    <property type="match status" value="1"/>
</dbReference>
<dbReference type="Pfam" id="PF00075">
    <property type="entry name" value="RNase_H"/>
    <property type="match status" value="1"/>
</dbReference>
<dbReference type="SUPFAM" id="SSF53098">
    <property type="entry name" value="Ribonuclease H-like"/>
    <property type="match status" value="1"/>
</dbReference>
<dbReference type="PROSITE" id="PS50879">
    <property type="entry name" value="RNASE_H_1"/>
    <property type="match status" value="1"/>
</dbReference>
<evidence type="ECO:0000255" key="1">
    <source>
        <dbReference type="HAMAP-Rule" id="MF_00042"/>
    </source>
</evidence>
<evidence type="ECO:0000255" key="2">
    <source>
        <dbReference type="PROSITE-ProRule" id="PRU00408"/>
    </source>
</evidence>
<comment type="function">
    <text evidence="1">Endonuclease that specifically degrades the RNA of RNA-DNA hybrids.</text>
</comment>
<comment type="catalytic activity">
    <reaction evidence="1">
        <text>Endonucleolytic cleavage to 5'-phosphomonoester.</text>
        <dbReference type="EC" id="3.1.26.4"/>
    </reaction>
</comment>
<comment type="cofactor">
    <cofactor evidence="1">
        <name>Mg(2+)</name>
        <dbReference type="ChEBI" id="CHEBI:18420"/>
    </cofactor>
    <text evidence="1">Binds 1 Mg(2+) ion per subunit. May bind a second metal ion at a regulatory site, or after substrate binding.</text>
</comment>
<comment type="subunit">
    <text evidence="1">Monomer.</text>
</comment>
<comment type="subcellular location">
    <subcellularLocation>
        <location evidence="1">Cytoplasm</location>
    </subcellularLocation>
</comment>
<comment type="similarity">
    <text evidence="1">Belongs to the RNase H family.</text>
</comment>
<reference key="1">
    <citation type="submission" date="2006-03" db="EMBL/GenBank/DDBJ databases">
        <title>Complete sequence of chromosome of Nitrobacter hamburgensis X14.</title>
        <authorList>
            <consortium name="US DOE Joint Genome Institute"/>
            <person name="Copeland A."/>
            <person name="Lucas S."/>
            <person name="Lapidus A."/>
            <person name="Barry K."/>
            <person name="Detter J.C."/>
            <person name="Glavina del Rio T."/>
            <person name="Hammon N."/>
            <person name="Israni S."/>
            <person name="Dalin E."/>
            <person name="Tice H."/>
            <person name="Pitluck S."/>
            <person name="Chain P."/>
            <person name="Malfatti S."/>
            <person name="Shin M."/>
            <person name="Vergez L."/>
            <person name="Schmutz J."/>
            <person name="Larimer F."/>
            <person name="Land M."/>
            <person name="Hauser L."/>
            <person name="Kyrpides N."/>
            <person name="Ivanova N."/>
            <person name="Ward B."/>
            <person name="Arp D."/>
            <person name="Klotz M."/>
            <person name="Stein L."/>
            <person name="O'Mullan G."/>
            <person name="Starkenburg S."/>
            <person name="Sayavedra L."/>
            <person name="Poret-Peterson A.T."/>
            <person name="Gentry M.E."/>
            <person name="Bruce D."/>
            <person name="Richardson P."/>
        </authorList>
    </citation>
    <scope>NUCLEOTIDE SEQUENCE [LARGE SCALE GENOMIC DNA]</scope>
    <source>
        <strain>DSM 10229 / NCIMB 13809 / X14</strain>
    </source>
</reference>
<organism>
    <name type="scientific">Nitrobacter hamburgensis (strain DSM 10229 / NCIMB 13809 / X14)</name>
    <dbReference type="NCBI Taxonomy" id="323097"/>
    <lineage>
        <taxon>Bacteria</taxon>
        <taxon>Pseudomonadati</taxon>
        <taxon>Pseudomonadota</taxon>
        <taxon>Alphaproteobacteria</taxon>
        <taxon>Hyphomicrobiales</taxon>
        <taxon>Nitrobacteraceae</taxon>
        <taxon>Nitrobacter</taxon>
    </lineage>
</organism>
<feature type="chain" id="PRO_0000332632" description="Ribonuclease H">
    <location>
        <begin position="1"/>
        <end position="151"/>
    </location>
</feature>
<feature type="domain" description="RNase H type-1" evidence="2">
    <location>
        <begin position="5"/>
        <end position="146"/>
    </location>
</feature>
<feature type="binding site" evidence="1">
    <location>
        <position position="14"/>
    </location>
    <ligand>
        <name>Mg(2+)</name>
        <dbReference type="ChEBI" id="CHEBI:18420"/>
        <label>1</label>
    </ligand>
</feature>
<feature type="binding site" evidence="1">
    <location>
        <position position="14"/>
    </location>
    <ligand>
        <name>Mg(2+)</name>
        <dbReference type="ChEBI" id="CHEBI:18420"/>
        <label>2</label>
    </ligand>
</feature>
<feature type="binding site" evidence="1">
    <location>
        <position position="52"/>
    </location>
    <ligand>
        <name>Mg(2+)</name>
        <dbReference type="ChEBI" id="CHEBI:18420"/>
        <label>1</label>
    </ligand>
</feature>
<feature type="binding site" evidence="1">
    <location>
        <position position="74"/>
    </location>
    <ligand>
        <name>Mg(2+)</name>
        <dbReference type="ChEBI" id="CHEBI:18420"/>
        <label>1</label>
    </ligand>
</feature>
<feature type="binding site" evidence="1">
    <location>
        <position position="138"/>
    </location>
    <ligand>
        <name>Mg(2+)</name>
        <dbReference type="ChEBI" id="CHEBI:18420"/>
        <label>2</label>
    </ligand>
</feature>